<accession>A3MMV0</accession>
<comment type="catalytic activity">
    <reaction evidence="1">
        <text>urea + 2 H2O + H(+) = hydrogencarbonate + 2 NH4(+)</text>
        <dbReference type="Rhea" id="RHEA:20557"/>
        <dbReference type="ChEBI" id="CHEBI:15377"/>
        <dbReference type="ChEBI" id="CHEBI:15378"/>
        <dbReference type="ChEBI" id="CHEBI:16199"/>
        <dbReference type="ChEBI" id="CHEBI:17544"/>
        <dbReference type="ChEBI" id="CHEBI:28938"/>
        <dbReference type="EC" id="3.5.1.5"/>
    </reaction>
</comment>
<comment type="pathway">
    <text evidence="1">Nitrogen metabolism; urea degradation; CO(2) and NH(3) from urea (urease route): step 1/1.</text>
</comment>
<comment type="subunit">
    <text evidence="1">Heterotrimer of UreA (gamma), UreB (beta) and UreC (alpha) subunits. Three heterotrimers associate to form the active enzyme.</text>
</comment>
<comment type="subcellular location">
    <subcellularLocation>
        <location evidence="1">Cytoplasm</location>
    </subcellularLocation>
</comment>
<comment type="similarity">
    <text evidence="1">Belongs to the urease gamma subunit family.</text>
</comment>
<proteinExistence type="inferred from homology"/>
<feature type="chain" id="PRO_1000046315" description="Urease subunit gamma">
    <location>
        <begin position="1"/>
        <end position="100"/>
    </location>
</feature>
<reference key="1">
    <citation type="journal article" date="2010" name="Genome Biol. Evol.">
        <title>Continuing evolution of Burkholderia mallei through genome reduction and large-scale rearrangements.</title>
        <authorList>
            <person name="Losada L."/>
            <person name="Ronning C.M."/>
            <person name="DeShazer D."/>
            <person name="Woods D."/>
            <person name="Fedorova N."/>
            <person name="Kim H.S."/>
            <person name="Shabalina S.A."/>
            <person name="Pearson T.R."/>
            <person name="Brinkac L."/>
            <person name="Tan P."/>
            <person name="Nandi T."/>
            <person name="Crabtree J."/>
            <person name="Badger J."/>
            <person name="Beckstrom-Sternberg S."/>
            <person name="Saqib M."/>
            <person name="Schutzer S.E."/>
            <person name="Keim P."/>
            <person name="Nierman W.C."/>
        </authorList>
    </citation>
    <scope>NUCLEOTIDE SEQUENCE [LARGE SCALE GENOMIC DNA]</scope>
    <source>
        <strain>NCTC 10247</strain>
    </source>
</reference>
<keyword id="KW-0963">Cytoplasm</keyword>
<keyword id="KW-0378">Hydrolase</keyword>
<name>URE3_BURM7</name>
<evidence type="ECO:0000255" key="1">
    <source>
        <dbReference type="HAMAP-Rule" id="MF_00739"/>
    </source>
</evidence>
<sequence length="100" mass="11172">MKLTPREKDKLLIFTAALLAERRRARGLKLNYPETVAFITAALMEAARDGRTVAEVMHYGTTLLTRDDVMEGVPEMIPDIQVEATFPDGTKLVTVHHPIP</sequence>
<gene>
    <name evidence="1" type="primary">ureA</name>
    <name type="ordered locus">BMA10247_2055</name>
</gene>
<dbReference type="EC" id="3.5.1.5" evidence="1"/>
<dbReference type="EMBL" id="CP000548">
    <property type="protein sequence ID" value="ABO07061.1"/>
    <property type="molecule type" value="Genomic_DNA"/>
</dbReference>
<dbReference type="RefSeq" id="WP_004186513.1">
    <property type="nucleotide sequence ID" value="NZ_CP007802.1"/>
</dbReference>
<dbReference type="SMR" id="A3MMV0"/>
<dbReference type="GeneID" id="93061237"/>
<dbReference type="KEGG" id="bmaz:BM44_1172"/>
<dbReference type="KEGG" id="bmn:BMA10247_2055"/>
<dbReference type="PATRIC" id="fig|320389.8.peg.1308"/>
<dbReference type="UniPathway" id="UPA00258">
    <property type="reaction ID" value="UER00370"/>
</dbReference>
<dbReference type="GO" id="GO:0005737">
    <property type="term" value="C:cytoplasm"/>
    <property type="evidence" value="ECO:0007669"/>
    <property type="project" value="UniProtKB-SubCell"/>
</dbReference>
<dbReference type="GO" id="GO:0016151">
    <property type="term" value="F:nickel cation binding"/>
    <property type="evidence" value="ECO:0007669"/>
    <property type="project" value="InterPro"/>
</dbReference>
<dbReference type="GO" id="GO:0009039">
    <property type="term" value="F:urease activity"/>
    <property type="evidence" value="ECO:0007669"/>
    <property type="project" value="UniProtKB-UniRule"/>
</dbReference>
<dbReference type="GO" id="GO:0043419">
    <property type="term" value="P:urea catabolic process"/>
    <property type="evidence" value="ECO:0007669"/>
    <property type="project" value="UniProtKB-UniRule"/>
</dbReference>
<dbReference type="CDD" id="cd00390">
    <property type="entry name" value="Urease_gamma"/>
    <property type="match status" value="1"/>
</dbReference>
<dbReference type="Gene3D" id="3.30.280.10">
    <property type="entry name" value="Urease, gamma-like subunit"/>
    <property type="match status" value="1"/>
</dbReference>
<dbReference type="HAMAP" id="MF_00739">
    <property type="entry name" value="Urease_gamma"/>
    <property type="match status" value="1"/>
</dbReference>
<dbReference type="InterPro" id="IPR012010">
    <property type="entry name" value="Urease_gamma"/>
</dbReference>
<dbReference type="InterPro" id="IPR002026">
    <property type="entry name" value="Urease_gamma/gamma-beta_su"/>
</dbReference>
<dbReference type="InterPro" id="IPR036463">
    <property type="entry name" value="Urease_gamma_sf"/>
</dbReference>
<dbReference type="InterPro" id="IPR050069">
    <property type="entry name" value="Urease_subunit"/>
</dbReference>
<dbReference type="NCBIfam" id="NF009712">
    <property type="entry name" value="PRK13241.1"/>
    <property type="match status" value="1"/>
</dbReference>
<dbReference type="NCBIfam" id="TIGR00193">
    <property type="entry name" value="urease_gam"/>
    <property type="match status" value="1"/>
</dbReference>
<dbReference type="PANTHER" id="PTHR33569">
    <property type="entry name" value="UREASE"/>
    <property type="match status" value="1"/>
</dbReference>
<dbReference type="PANTHER" id="PTHR33569:SF1">
    <property type="entry name" value="UREASE"/>
    <property type="match status" value="1"/>
</dbReference>
<dbReference type="Pfam" id="PF00547">
    <property type="entry name" value="Urease_gamma"/>
    <property type="match status" value="1"/>
</dbReference>
<dbReference type="PIRSF" id="PIRSF001223">
    <property type="entry name" value="Urease_gamma"/>
    <property type="match status" value="1"/>
</dbReference>
<dbReference type="SUPFAM" id="SSF54111">
    <property type="entry name" value="Urease, gamma-subunit"/>
    <property type="match status" value="1"/>
</dbReference>
<organism>
    <name type="scientific">Burkholderia mallei (strain NCTC 10247)</name>
    <dbReference type="NCBI Taxonomy" id="320389"/>
    <lineage>
        <taxon>Bacteria</taxon>
        <taxon>Pseudomonadati</taxon>
        <taxon>Pseudomonadota</taxon>
        <taxon>Betaproteobacteria</taxon>
        <taxon>Burkholderiales</taxon>
        <taxon>Burkholderiaceae</taxon>
        <taxon>Burkholderia</taxon>
        <taxon>pseudomallei group</taxon>
    </lineage>
</organism>
<protein>
    <recommendedName>
        <fullName evidence="1">Urease subunit gamma</fullName>
        <ecNumber evidence="1">3.5.1.5</ecNumber>
    </recommendedName>
    <alternativeName>
        <fullName evidence="1">Urea amidohydrolase subunit gamma</fullName>
    </alternativeName>
</protein>